<accession>B7V648</accession>
<reference key="1">
    <citation type="journal article" date="2009" name="Genome Res.">
        <title>Newly introduced genomic prophage islands are critical determinants of in vivo competitiveness in the Liverpool epidemic strain of Pseudomonas aeruginosa.</title>
        <authorList>
            <person name="Winstanley C."/>
            <person name="Langille M.G.I."/>
            <person name="Fothergill J.L."/>
            <person name="Kukavica-Ibrulj I."/>
            <person name="Paradis-Bleau C."/>
            <person name="Sanschagrin F."/>
            <person name="Thomson N.R."/>
            <person name="Winsor G.L."/>
            <person name="Quail M.A."/>
            <person name="Lennard N."/>
            <person name="Bignell A."/>
            <person name="Clarke L."/>
            <person name="Seeger K."/>
            <person name="Saunders D."/>
            <person name="Harris D."/>
            <person name="Parkhill J."/>
            <person name="Hancock R.E.W."/>
            <person name="Brinkman F.S.L."/>
            <person name="Levesque R.C."/>
        </authorList>
    </citation>
    <scope>NUCLEOTIDE SEQUENCE [LARGE SCALE GENOMIC DNA]</scope>
    <source>
        <strain>LESB58</strain>
    </source>
</reference>
<proteinExistence type="inferred from homology"/>
<name>RS19_PSEA8</name>
<sequence length="91" mass="10357">MPRSLKKGPFIDLHLLKKVEVAVEKNDRKPIKTWSRRSMILPHMVGLTIAVHNGRQHVPVLVNEDMVGHKLGEFAATRTYRGHAADKKAKR</sequence>
<gene>
    <name evidence="1" type="primary">rpsS</name>
    <name type="ordered locus">PLES_06691</name>
</gene>
<organism>
    <name type="scientific">Pseudomonas aeruginosa (strain LESB58)</name>
    <dbReference type="NCBI Taxonomy" id="557722"/>
    <lineage>
        <taxon>Bacteria</taxon>
        <taxon>Pseudomonadati</taxon>
        <taxon>Pseudomonadota</taxon>
        <taxon>Gammaproteobacteria</taxon>
        <taxon>Pseudomonadales</taxon>
        <taxon>Pseudomonadaceae</taxon>
        <taxon>Pseudomonas</taxon>
    </lineage>
</organism>
<evidence type="ECO:0000255" key="1">
    <source>
        <dbReference type="HAMAP-Rule" id="MF_00531"/>
    </source>
</evidence>
<evidence type="ECO:0000305" key="2"/>
<protein>
    <recommendedName>
        <fullName evidence="1">Small ribosomal subunit protein uS19</fullName>
    </recommendedName>
    <alternativeName>
        <fullName evidence="2">30S ribosomal protein S19</fullName>
    </alternativeName>
</protein>
<comment type="function">
    <text evidence="1">Protein S19 forms a complex with S13 that binds strongly to the 16S ribosomal RNA.</text>
</comment>
<comment type="similarity">
    <text evidence="1">Belongs to the universal ribosomal protein uS19 family.</text>
</comment>
<keyword id="KW-0687">Ribonucleoprotein</keyword>
<keyword id="KW-0689">Ribosomal protein</keyword>
<keyword id="KW-0694">RNA-binding</keyword>
<keyword id="KW-0699">rRNA-binding</keyword>
<feature type="chain" id="PRO_1000128021" description="Small ribosomal subunit protein uS19">
    <location>
        <begin position="1"/>
        <end position="91"/>
    </location>
</feature>
<dbReference type="EMBL" id="FM209186">
    <property type="protein sequence ID" value="CAW25396.1"/>
    <property type="molecule type" value="Genomic_DNA"/>
</dbReference>
<dbReference type="RefSeq" id="WP_003093734.1">
    <property type="nucleotide sequence ID" value="NC_011770.1"/>
</dbReference>
<dbReference type="SMR" id="B7V648"/>
<dbReference type="GeneID" id="77219202"/>
<dbReference type="KEGG" id="pag:PLES_06691"/>
<dbReference type="HOGENOM" id="CLU_144911_0_1_6"/>
<dbReference type="GO" id="GO:0005737">
    <property type="term" value="C:cytoplasm"/>
    <property type="evidence" value="ECO:0007669"/>
    <property type="project" value="UniProtKB-ARBA"/>
</dbReference>
<dbReference type="GO" id="GO:0015935">
    <property type="term" value="C:small ribosomal subunit"/>
    <property type="evidence" value="ECO:0007669"/>
    <property type="project" value="InterPro"/>
</dbReference>
<dbReference type="GO" id="GO:0019843">
    <property type="term" value="F:rRNA binding"/>
    <property type="evidence" value="ECO:0007669"/>
    <property type="project" value="UniProtKB-UniRule"/>
</dbReference>
<dbReference type="GO" id="GO:0003735">
    <property type="term" value="F:structural constituent of ribosome"/>
    <property type="evidence" value="ECO:0007669"/>
    <property type="project" value="InterPro"/>
</dbReference>
<dbReference type="GO" id="GO:0000028">
    <property type="term" value="P:ribosomal small subunit assembly"/>
    <property type="evidence" value="ECO:0007669"/>
    <property type="project" value="TreeGrafter"/>
</dbReference>
<dbReference type="GO" id="GO:0006412">
    <property type="term" value="P:translation"/>
    <property type="evidence" value="ECO:0007669"/>
    <property type="project" value="UniProtKB-UniRule"/>
</dbReference>
<dbReference type="FunFam" id="3.30.860.10:FF:000001">
    <property type="entry name" value="30S ribosomal protein S19"/>
    <property type="match status" value="1"/>
</dbReference>
<dbReference type="Gene3D" id="3.30.860.10">
    <property type="entry name" value="30s Ribosomal Protein S19, Chain A"/>
    <property type="match status" value="1"/>
</dbReference>
<dbReference type="HAMAP" id="MF_00531">
    <property type="entry name" value="Ribosomal_uS19"/>
    <property type="match status" value="1"/>
</dbReference>
<dbReference type="InterPro" id="IPR002222">
    <property type="entry name" value="Ribosomal_uS19"/>
</dbReference>
<dbReference type="InterPro" id="IPR005732">
    <property type="entry name" value="Ribosomal_uS19_bac-type"/>
</dbReference>
<dbReference type="InterPro" id="IPR020934">
    <property type="entry name" value="Ribosomal_uS19_CS"/>
</dbReference>
<dbReference type="InterPro" id="IPR023575">
    <property type="entry name" value="Ribosomal_uS19_SF"/>
</dbReference>
<dbReference type="NCBIfam" id="TIGR01050">
    <property type="entry name" value="rpsS_bact"/>
    <property type="match status" value="1"/>
</dbReference>
<dbReference type="PANTHER" id="PTHR11880">
    <property type="entry name" value="RIBOSOMAL PROTEIN S19P FAMILY MEMBER"/>
    <property type="match status" value="1"/>
</dbReference>
<dbReference type="PANTHER" id="PTHR11880:SF8">
    <property type="entry name" value="SMALL RIBOSOMAL SUBUNIT PROTEIN US19M"/>
    <property type="match status" value="1"/>
</dbReference>
<dbReference type="Pfam" id="PF00203">
    <property type="entry name" value="Ribosomal_S19"/>
    <property type="match status" value="1"/>
</dbReference>
<dbReference type="PIRSF" id="PIRSF002144">
    <property type="entry name" value="Ribosomal_S19"/>
    <property type="match status" value="1"/>
</dbReference>
<dbReference type="PRINTS" id="PR00975">
    <property type="entry name" value="RIBOSOMALS19"/>
</dbReference>
<dbReference type="SUPFAM" id="SSF54570">
    <property type="entry name" value="Ribosomal protein S19"/>
    <property type="match status" value="1"/>
</dbReference>
<dbReference type="PROSITE" id="PS00323">
    <property type="entry name" value="RIBOSOMAL_S19"/>
    <property type="match status" value="1"/>
</dbReference>